<accession>Q96069</accession>
<comment type="function">
    <text evidence="1">Core subunit of the mitochondrial membrane respiratory chain NADH dehydrogenase (Complex I) which catalyzes electron transfer from NADH through the respiratory chain, using ubiquinone as an electron acceptor. Essential for the catalytic activity and assembly of complex I.</text>
</comment>
<comment type="catalytic activity">
    <reaction evidence="1">
        <text>a ubiquinone + NADH + 5 H(+)(in) = a ubiquinol + NAD(+) + 4 H(+)(out)</text>
        <dbReference type="Rhea" id="RHEA:29091"/>
        <dbReference type="Rhea" id="RHEA-COMP:9565"/>
        <dbReference type="Rhea" id="RHEA-COMP:9566"/>
        <dbReference type="ChEBI" id="CHEBI:15378"/>
        <dbReference type="ChEBI" id="CHEBI:16389"/>
        <dbReference type="ChEBI" id="CHEBI:17976"/>
        <dbReference type="ChEBI" id="CHEBI:57540"/>
        <dbReference type="ChEBI" id="CHEBI:57945"/>
        <dbReference type="EC" id="7.1.1.2"/>
    </reaction>
</comment>
<comment type="subunit">
    <text evidence="2">Core subunit of respiratory chain NADH dehydrogenase (Complex I) which is composed of 45 different subunits.</text>
</comment>
<comment type="subcellular location">
    <subcellularLocation>
        <location evidence="2">Mitochondrion inner membrane</location>
        <topology evidence="3">Multi-pass membrane protein</topology>
    </subcellularLocation>
</comment>
<comment type="similarity">
    <text evidence="4">Belongs to the complex I subunit 5 family.</text>
</comment>
<gene>
    <name type="primary">MT-ND5</name>
    <name type="synonym">MTND5</name>
    <name type="synonym">NADH5</name>
    <name type="synonym">ND5</name>
</gene>
<organism>
    <name type="scientific">Rhinoceros unicornis</name>
    <name type="common">Greater Indian rhinoceros</name>
    <dbReference type="NCBI Taxonomy" id="9809"/>
    <lineage>
        <taxon>Eukaryota</taxon>
        <taxon>Metazoa</taxon>
        <taxon>Chordata</taxon>
        <taxon>Craniata</taxon>
        <taxon>Vertebrata</taxon>
        <taxon>Euteleostomi</taxon>
        <taxon>Mammalia</taxon>
        <taxon>Eutheria</taxon>
        <taxon>Laurasiatheria</taxon>
        <taxon>Perissodactyla</taxon>
        <taxon>Rhinocerotidae</taxon>
        <taxon>Rhinoceros</taxon>
    </lineage>
</organism>
<geneLocation type="mitochondrion"/>
<sequence>MNIFPSLMLTSLFTLTLPIIASTLNIHKNSNTPHHMKNIISFAFIISLIPTMMFIYSGQEMIISNWHWMTTQTLKLSLSFKLDYFSMIFVPVALFVTWSIMEFSIWYMHSDPHITQFFKYLLMFLITMMILVTANNLFQLFIGWEGVGIMSFLLIGWWYGRTDANTAALQAILYNRIGDIGFIMSMAWFLSNMNSWDLQQIFTLDPNHTNLPLMGLLLAATGKSAQFGLHPWLPSAMEGPTPVSALLHSSTMVVAGVFLLIRFHPLMENNKTAQTLTLCLGAITTLFTAICALTQNDIKKIIAFSTSSQLGLMIVTIGINQPHLAFLHICTHAFFKAMLFMCSGSIIHNLNNEQDIRKMGGLFKTMPFTATSLIIGSFALTGMPFLTGFYSKDLIIETANTSYTNAWALLMTLIATSLTAAYSTRMIFFTLLGQPRFPTLITINENNPHLTNSIKRLLIGSIFAGFFISNNIYPTTTPKMTMPSYLKLMALIVTILGFALALELSLATYNLKFKHPSNPLKFSSLLGYFPTIFHRLPPSMGLLASQKSASLLLDSMWLENILPKSISLFQMKSSTLVSNQKGLIKLYFLSFLITLTLSLLLLTPHG</sequence>
<evidence type="ECO:0000250" key="1">
    <source>
        <dbReference type="UniProtKB" id="P03915"/>
    </source>
</evidence>
<evidence type="ECO:0000250" key="2">
    <source>
        <dbReference type="UniProtKB" id="P03920"/>
    </source>
</evidence>
<evidence type="ECO:0000255" key="3"/>
<evidence type="ECO:0000305" key="4"/>
<keyword id="KW-0249">Electron transport</keyword>
<keyword id="KW-0472">Membrane</keyword>
<keyword id="KW-0496">Mitochondrion</keyword>
<keyword id="KW-0999">Mitochondrion inner membrane</keyword>
<keyword id="KW-0520">NAD</keyword>
<keyword id="KW-0679">Respiratory chain</keyword>
<keyword id="KW-1278">Translocase</keyword>
<keyword id="KW-0812">Transmembrane</keyword>
<keyword id="KW-1133">Transmembrane helix</keyword>
<keyword id="KW-0813">Transport</keyword>
<keyword id="KW-0830">Ubiquinone</keyword>
<name>NU5M_RHIUN</name>
<reference key="1">
    <citation type="journal article" date="1996" name="Mol. Biol. Evol.">
        <title>The complete mitochondrial DNA sequence of the greater Indian rhinoceros, Rhinoceros unicornis, and the Phylogenetic relationship among Carnivora, Perissodactyla, and Artiodactyla (+ Cetacea).</title>
        <authorList>
            <person name="Xu X."/>
            <person name="Janke A."/>
            <person name="Arnason U."/>
        </authorList>
    </citation>
    <scope>NUCLEOTIDE SEQUENCE [GENOMIC DNA]</scope>
    <source>
        <tissue>Kidney</tissue>
    </source>
</reference>
<protein>
    <recommendedName>
        <fullName>NADH-ubiquinone oxidoreductase chain 5</fullName>
        <ecNumber evidence="1">7.1.1.2</ecNumber>
    </recommendedName>
    <alternativeName>
        <fullName>NADH dehydrogenase subunit 5</fullName>
    </alternativeName>
</protein>
<proteinExistence type="inferred from homology"/>
<dbReference type="EC" id="7.1.1.2" evidence="1"/>
<dbReference type="EMBL" id="X97336">
    <property type="protein sequence ID" value="CAA66011.1"/>
    <property type="molecule type" value="Genomic_DNA"/>
</dbReference>
<dbReference type="PIR" id="T11257">
    <property type="entry name" value="T11257"/>
</dbReference>
<dbReference type="RefSeq" id="NP_007378.1">
    <property type="nucleotide sequence ID" value="NC_001779.1"/>
</dbReference>
<dbReference type="SMR" id="Q96069"/>
<dbReference type="GeneID" id="808046"/>
<dbReference type="CTD" id="4540"/>
<dbReference type="GO" id="GO:0005743">
    <property type="term" value="C:mitochondrial inner membrane"/>
    <property type="evidence" value="ECO:0000250"/>
    <property type="project" value="UniProtKB"/>
</dbReference>
<dbReference type="GO" id="GO:0008137">
    <property type="term" value="F:NADH dehydrogenase (ubiquinone) activity"/>
    <property type="evidence" value="ECO:0000250"/>
    <property type="project" value="UniProtKB"/>
</dbReference>
<dbReference type="GO" id="GO:0015990">
    <property type="term" value="P:electron transport coupled proton transport"/>
    <property type="evidence" value="ECO:0007669"/>
    <property type="project" value="TreeGrafter"/>
</dbReference>
<dbReference type="GO" id="GO:0006120">
    <property type="term" value="P:mitochondrial electron transport, NADH to ubiquinone"/>
    <property type="evidence" value="ECO:0000250"/>
    <property type="project" value="UniProtKB"/>
</dbReference>
<dbReference type="GO" id="GO:0032981">
    <property type="term" value="P:mitochondrial respiratory chain complex I assembly"/>
    <property type="evidence" value="ECO:0000250"/>
    <property type="project" value="UniProtKB"/>
</dbReference>
<dbReference type="InterPro" id="IPR010934">
    <property type="entry name" value="NADH_DH_su5_C"/>
</dbReference>
<dbReference type="InterPro" id="IPR018393">
    <property type="entry name" value="NADHpl_OxRdtase_5_subgr"/>
</dbReference>
<dbReference type="InterPro" id="IPR001750">
    <property type="entry name" value="ND/Mrp_TM"/>
</dbReference>
<dbReference type="InterPro" id="IPR003945">
    <property type="entry name" value="NU5C-like"/>
</dbReference>
<dbReference type="InterPro" id="IPR001516">
    <property type="entry name" value="Proton_antipo_N"/>
</dbReference>
<dbReference type="NCBIfam" id="TIGR01974">
    <property type="entry name" value="NDH_I_L"/>
    <property type="match status" value="1"/>
</dbReference>
<dbReference type="PANTHER" id="PTHR42829">
    <property type="entry name" value="NADH-UBIQUINONE OXIDOREDUCTASE CHAIN 5"/>
    <property type="match status" value="1"/>
</dbReference>
<dbReference type="PANTHER" id="PTHR42829:SF2">
    <property type="entry name" value="NADH-UBIQUINONE OXIDOREDUCTASE CHAIN 5"/>
    <property type="match status" value="1"/>
</dbReference>
<dbReference type="Pfam" id="PF06455">
    <property type="entry name" value="NADH5_C"/>
    <property type="match status" value="1"/>
</dbReference>
<dbReference type="Pfam" id="PF00361">
    <property type="entry name" value="Proton_antipo_M"/>
    <property type="match status" value="1"/>
</dbReference>
<dbReference type="Pfam" id="PF00662">
    <property type="entry name" value="Proton_antipo_N"/>
    <property type="match status" value="1"/>
</dbReference>
<dbReference type="PRINTS" id="PR01434">
    <property type="entry name" value="NADHDHGNASE5"/>
</dbReference>
<feature type="chain" id="PRO_0000118144" description="NADH-ubiquinone oxidoreductase chain 5">
    <location>
        <begin position="1"/>
        <end position="606"/>
    </location>
</feature>
<feature type="transmembrane region" description="Helical" evidence="3">
    <location>
        <begin position="1"/>
        <end position="21"/>
    </location>
</feature>
<feature type="transmembrane region" description="Helical" evidence="3">
    <location>
        <begin position="38"/>
        <end position="58"/>
    </location>
</feature>
<feature type="transmembrane region" description="Helical" evidence="3">
    <location>
        <begin position="87"/>
        <end position="107"/>
    </location>
</feature>
<feature type="transmembrane region" description="Helical" evidence="3">
    <location>
        <begin position="114"/>
        <end position="134"/>
    </location>
</feature>
<feature type="transmembrane region" description="Helical" evidence="3">
    <location>
        <begin position="140"/>
        <end position="160"/>
    </location>
</feature>
<feature type="transmembrane region" description="Helical" evidence="3">
    <location>
        <begin position="171"/>
        <end position="191"/>
    </location>
</feature>
<feature type="transmembrane region" description="Helical" evidence="3">
    <location>
        <begin position="213"/>
        <end position="233"/>
    </location>
</feature>
<feature type="transmembrane region" description="Helical" evidence="3">
    <location>
        <begin position="241"/>
        <end position="261"/>
    </location>
</feature>
<feature type="transmembrane region" description="Helical" evidence="3">
    <location>
        <begin position="273"/>
        <end position="293"/>
    </location>
</feature>
<feature type="transmembrane region" description="Helical" evidence="3">
    <location>
        <begin position="301"/>
        <end position="320"/>
    </location>
</feature>
<feature type="transmembrane region" description="Helical" evidence="3">
    <location>
        <begin position="325"/>
        <end position="347"/>
    </location>
</feature>
<feature type="transmembrane region" description="Helical" evidence="3">
    <location>
        <begin position="366"/>
        <end position="386"/>
    </location>
</feature>
<feature type="transmembrane region" description="Helical" evidence="3">
    <location>
        <begin position="409"/>
        <end position="429"/>
    </location>
</feature>
<feature type="transmembrane region" description="Helical" evidence="3">
    <location>
        <begin position="457"/>
        <end position="477"/>
    </location>
</feature>
<feature type="transmembrane region" description="Helical" evidence="3">
    <location>
        <begin position="488"/>
        <end position="508"/>
    </location>
</feature>
<feature type="transmembrane region" description="Helical" evidence="3">
    <location>
        <begin position="582"/>
        <end position="602"/>
    </location>
</feature>